<accession>B0SM94</accession>
<organism>
    <name type="scientific">Leptospira biflexa serovar Patoc (strain Patoc 1 / ATCC 23582 / Paris)</name>
    <dbReference type="NCBI Taxonomy" id="456481"/>
    <lineage>
        <taxon>Bacteria</taxon>
        <taxon>Pseudomonadati</taxon>
        <taxon>Spirochaetota</taxon>
        <taxon>Spirochaetia</taxon>
        <taxon>Leptospirales</taxon>
        <taxon>Leptospiraceae</taxon>
        <taxon>Leptospira</taxon>
    </lineage>
</organism>
<reference key="1">
    <citation type="journal article" date="2008" name="PLoS ONE">
        <title>Genome sequence of the saprophyte Leptospira biflexa provides insights into the evolution of Leptospira and the pathogenesis of leptospirosis.</title>
        <authorList>
            <person name="Picardeau M."/>
            <person name="Bulach D.M."/>
            <person name="Bouchier C."/>
            <person name="Zuerner R.L."/>
            <person name="Zidane N."/>
            <person name="Wilson P.J."/>
            <person name="Creno S."/>
            <person name="Kuczek E.S."/>
            <person name="Bommezzadri S."/>
            <person name="Davis J.C."/>
            <person name="McGrath A."/>
            <person name="Johnson M.J."/>
            <person name="Boursaux-Eude C."/>
            <person name="Seemann T."/>
            <person name="Rouy Z."/>
            <person name="Coppel R.L."/>
            <person name="Rood J.I."/>
            <person name="Lajus A."/>
            <person name="Davies J.K."/>
            <person name="Medigue C."/>
            <person name="Adler B."/>
        </authorList>
    </citation>
    <scope>NUCLEOTIDE SEQUENCE [LARGE SCALE GENOMIC DNA]</scope>
    <source>
        <strain>Patoc 1 / ATCC 23582 / Paris</strain>
    </source>
</reference>
<evidence type="ECO:0000255" key="1">
    <source>
        <dbReference type="HAMAP-Rule" id="MF_00101"/>
    </source>
</evidence>
<name>ACPS_LEPBP</name>
<feature type="chain" id="PRO_1000093890" description="Holo-[acyl-carrier-protein] synthase">
    <location>
        <begin position="1"/>
        <end position="127"/>
    </location>
</feature>
<feature type="binding site" evidence="1">
    <location>
        <position position="7"/>
    </location>
    <ligand>
        <name>Mg(2+)</name>
        <dbReference type="ChEBI" id="CHEBI:18420"/>
    </ligand>
</feature>
<feature type="binding site" evidence="1">
    <location>
        <position position="56"/>
    </location>
    <ligand>
        <name>Mg(2+)</name>
        <dbReference type="ChEBI" id="CHEBI:18420"/>
    </ligand>
</feature>
<protein>
    <recommendedName>
        <fullName evidence="1">Holo-[acyl-carrier-protein] synthase</fullName>
        <shortName evidence="1">Holo-ACP synthase</shortName>
        <ecNumber evidence="1">2.7.8.7</ecNumber>
    </recommendedName>
    <alternativeName>
        <fullName evidence="1">4'-phosphopantetheinyl transferase AcpS</fullName>
    </alternativeName>
</protein>
<keyword id="KW-0963">Cytoplasm</keyword>
<keyword id="KW-0275">Fatty acid biosynthesis</keyword>
<keyword id="KW-0276">Fatty acid metabolism</keyword>
<keyword id="KW-0444">Lipid biosynthesis</keyword>
<keyword id="KW-0443">Lipid metabolism</keyword>
<keyword id="KW-0460">Magnesium</keyword>
<keyword id="KW-0479">Metal-binding</keyword>
<keyword id="KW-1185">Reference proteome</keyword>
<keyword id="KW-0808">Transferase</keyword>
<gene>
    <name evidence="1" type="primary">acpS</name>
    <name type="ordered locus">LEPBI_I2645</name>
</gene>
<sequence>MLSVGNDIVENERIRELLQKHGDRFLKRVFTDDEVEYCHKHKDPVPFLAGRFACKEAVIKALNLEPGQVADMREIELAGTNFGKKTLVIHGKTEKFFREKGFTGSSVSISHADHYSTAVVVFFKEPK</sequence>
<dbReference type="EC" id="2.7.8.7" evidence="1"/>
<dbReference type="EMBL" id="CP000786">
    <property type="protein sequence ID" value="ABZ98724.1"/>
    <property type="molecule type" value="Genomic_DNA"/>
</dbReference>
<dbReference type="RefSeq" id="WP_012389584.1">
    <property type="nucleotide sequence ID" value="NC_010602.1"/>
</dbReference>
<dbReference type="SMR" id="B0SM94"/>
<dbReference type="STRING" id="456481.LEPBI_I2645"/>
<dbReference type="KEGG" id="lbi:LEPBI_I2645"/>
<dbReference type="HOGENOM" id="CLU_089696_2_1_12"/>
<dbReference type="OrthoDB" id="517356at2"/>
<dbReference type="BioCyc" id="LBIF456481:LEPBI_RS13010-MONOMER"/>
<dbReference type="Proteomes" id="UP000001847">
    <property type="component" value="Chromosome I"/>
</dbReference>
<dbReference type="GO" id="GO:0005737">
    <property type="term" value="C:cytoplasm"/>
    <property type="evidence" value="ECO:0007669"/>
    <property type="project" value="UniProtKB-SubCell"/>
</dbReference>
<dbReference type="GO" id="GO:0008897">
    <property type="term" value="F:holo-[acyl-carrier-protein] synthase activity"/>
    <property type="evidence" value="ECO:0007669"/>
    <property type="project" value="UniProtKB-UniRule"/>
</dbReference>
<dbReference type="GO" id="GO:0000287">
    <property type="term" value="F:magnesium ion binding"/>
    <property type="evidence" value="ECO:0007669"/>
    <property type="project" value="UniProtKB-UniRule"/>
</dbReference>
<dbReference type="GO" id="GO:0006633">
    <property type="term" value="P:fatty acid biosynthetic process"/>
    <property type="evidence" value="ECO:0007669"/>
    <property type="project" value="UniProtKB-UniRule"/>
</dbReference>
<dbReference type="Gene3D" id="3.90.470.20">
    <property type="entry name" value="4'-phosphopantetheinyl transferase domain"/>
    <property type="match status" value="1"/>
</dbReference>
<dbReference type="HAMAP" id="MF_00101">
    <property type="entry name" value="AcpS"/>
    <property type="match status" value="1"/>
</dbReference>
<dbReference type="InterPro" id="IPR008278">
    <property type="entry name" value="4-PPantetheinyl_Trfase_dom"/>
</dbReference>
<dbReference type="InterPro" id="IPR037143">
    <property type="entry name" value="4-PPantetheinyl_Trfase_dom_sf"/>
</dbReference>
<dbReference type="InterPro" id="IPR002582">
    <property type="entry name" value="ACPS"/>
</dbReference>
<dbReference type="InterPro" id="IPR004568">
    <property type="entry name" value="Ppantetheine-prot_Trfase_dom"/>
</dbReference>
<dbReference type="NCBIfam" id="TIGR00516">
    <property type="entry name" value="acpS"/>
    <property type="match status" value="1"/>
</dbReference>
<dbReference type="NCBIfam" id="TIGR00556">
    <property type="entry name" value="pantethn_trn"/>
    <property type="match status" value="1"/>
</dbReference>
<dbReference type="Pfam" id="PF01648">
    <property type="entry name" value="ACPS"/>
    <property type="match status" value="1"/>
</dbReference>
<dbReference type="SUPFAM" id="SSF56214">
    <property type="entry name" value="4'-phosphopantetheinyl transferase"/>
    <property type="match status" value="1"/>
</dbReference>
<comment type="function">
    <text evidence="1">Transfers the 4'-phosphopantetheine moiety from coenzyme A to a Ser of acyl-carrier-protein.</text>
</comment>
<comment type="catalytic activity">
    <reaction evidence="1">
        <text>apo-[ACP] + CoA = holo-[ACP] + adenosine 3',5'-bisphosphate + H(+)</text>
        <dbReference type="Rhea" id="RHEA:12068"/>
        <dbReference type="Rhea" id="RHEA-COMP:9685"/>
        <dbReference type="Rhea" id="RHEA-COMP:9690"/>
        <dbReference type="ChEBI" id="CHEBI:15378"/>
        <dbReference type="ChEBI" id="CHEBI:29999"/>
        <dbReference type="ChEBI" id="CHEBI:57287"/>
        <dbReference type="ChEBI" id="CHEBI:58343"/>
        <dbReference type="ChEBI" id="CHEBI:64479"/>
        <dbReference type="EC" id="2.7.8.7"/>
    </reaction>
</comment>
<comment type="cofactor">
    <cofactor evidence="1">
        <name>Mg(2+)</name>
        <dbReference type="ChEBI" id="CHEBI:18420"/>
    </cofactor>
</comment>
<comment type="subcellular location">
    <subcellularLocation>
        <location evidence="1">Cytoplasm</location>
    </subcellularLocation>
</comment>
<comment type="similarity">
    <text evidence="1">Belongs to the P-Pant transferase superfamily. AcpS family.</text>
</comment>
<proteinExistence type="inferred from homology"/>